<name>YIIE_ECOL5</name>
<feature type="chain" id="PRO_0000293687" description="Uncharacterized protein YiiE">
    <location>
        <begin position="1"/>
        <end position="72"/>
    </location>
</feature>
<feature type="region of interest" description="Disordered" evidence="1">
    <location>
        <begin position="51"/>
        <end position="72"/>
    </location>
</feature>
<sequence length="72" mass="8480">MAMNTVFLHLSEEAIKRLNKLRGWRKVSRSAILREAVEQYLERQQFPVRKAKGGRQRGETVVVDDQCKEHKE</sequence>
<comment type="similarity">
    <text evidence="2">Belongs to the YiiE family.</text>
</comment>
<reference key="1">
    <citation type="journal article" date="2006" name="Mol. Microbiol.">
        <title>Role of pathogenicity island-associated integrases in the genome plasticity of uropathogenic Escherichia coli strain 536.</title>
        <authorList>
            <person name="Hochhut B."/>
            <person name="Wilde C."/>
            <person name="Balling G."/>
            <person name="Middendorf B."/>
            <person name="Dobrindt U."/>
            <person name="Brzuszkiewicz E."/>
            <person name="Gottschalk G."/>
            <person name="Carniel E."/>
            <person name="Hacker J."/>
        </authorList>
    </citation>
    <scope>NUCLEOTIDE SEQUENCE [LARGE SCALE GENOMIC DNA]</scope>
    <source>
        <strain>536 / UPEC</strain>
    </source>
</reference>
<gene>
    <name type="primary">yiiE</name>
    <name type="ordered locus">ECP_4102</name>
</gene>
<proteinExistence type="inferred from homology"/>
<dbReference type="EMBL" id="CP000247">
    <property type="protein sequence ID" value="ABG72060.1"/>
    <property type="molecule type" value="Genomic_DNA"/>
</dbReference>
<dbReference type="RefSeq" id="WP_001298592.1">
    <property type="nucleotide sequence ID" value="NC_008253.1"/>
</dbReference>
<dbReference type="SMR" id="Q0TAG9"/>
<dbReference type="KEGG" id="ecp:ECP_4102"/>
<dbReference type="HOGENOM" id="CLU_182089_1_0_6"/>
<dbReference type="Proteomes" id="UP000009182">
    <property type="component" value="Chromosome"/>
</dbReference>
<dbReference type="GO" id="GO:0043565">
    <property type="term" value="F:sequence-specific DNA binding"/>
    <property type="evidence" value="ECO:0007669"/>
    <property type="project" value="UniProtKB-ARBA"/>
</dbReference>
<dbReference type="GO" id="GO:0006355">
    <property type="term" value="P:regulation of DNA-templated transcription"/>
    <property type="evidence" value="ECO:0007669"/>
    <property type="project" value="InterPro"/>
</dbReference>
<dbReference type="CDD" id="cd21631">
    <property type="entry name" value="RHH_CopG_NikR-like"/>
    <property type="match status" value="1"/>
</dbReference>
<dbReference type="Gene3D" id="1.10.1220.10">
    <property type="entry name" value="Met repressor-like"/>
    <property type="match status" value="1"/>
</dbReference>
<dbReference type="InterPro" id="IPR013321">
    <property type="entry name" value="Arc_rbn_hlx_hlx"/>
</dbReference>
<dbReference type="InterPro" id="IPR002145">
    <property type="entry name" value="CopG"/>
</dbReference>
<dbReference type="Pfam" id="PF01402">
    <property type="entry name" value="RHH_1"/>
    <property type="match status" value="1"/>
</dbReference>
<accession>Q0TAG9</accession>
<organism>
    <name type="scientific">Escherichia coli O6:K15:H31 (strain 536 / UPEC)</name>
    <dbReference type="NCBI Taxonomy" id="362663"/>
    <lineage>
        <taxon>Bacteria</taxon>
        <taxon>Pseudomonadati</taxon>
        <taxon>Pseudomonadota</taxon>
        <taxon>Gammaproteobacteria</taxon>
        <taxon>Enterobacterales</taxon>
        <taxon>Enterobacteriaceae</taxon>
        <taxon>Escherichia</taxon>
    </lineage>
</organism>
<protein>
    <recommendedName>
        <fullName>Uncharacterized protein YiiE</fullName>
    </recommendedName>
</protein>
<evidence type="ECO:0000256" key="1">
    <source>
        <dbReference type="SAM" id="MobiDB-lite"/>
    </source>
</evidence>
<evidence type="ECO:0000305" key="2"/>